<feature type="transit peptide" description="Chloroplast" evidence="3">
    <location>
        <begin position="1"/>
        <end position="29"/>
    </location>
</feature>
<feature type="chain" id="PRO_0000417065" description="Palmitoyl-[acyl-carrier-protein] 4-desaturase 3, chloroplastic">
    <location>
        <begin position="30"/>
        <end position="398"/>
    </location>
</feature>
<feature type="binding site" evidence="1">
    <location>
        <position position="139"/>
    </location>
    <ligand>
        <name>Fe cation</name>
        <dbReference type="ChEBI" id="CHEBI:24875"/>
        <label>1</label>
    </ligand>
</feature>
<feature type="binding site" evidence="1">
    <location>
        <position position="177"/>
    </location>
    <ligand>
        <name>Fe cation</name>
        <dbReference type="ChEBI" id="CHEBI:24875"/>
        <label>1</label>
    </ligand>
</feature>
<feature type="binding site" evidence="1">
    <location>
        <position position="177"/>
    </location>
    <ligand>
        <name>Fe cation</name>
        <dbReference type="ChEBI" id="CHEBI:24875"/>
        <label>2</label>
    </ligand>
</feature>
<feature type="binding site" evidence="1">
    <location>
        <position position="180"/>
    </location>
    <ligand>
        <name>Fe cation</name>
        <dbReference type="ChEBI" id="CHEBI:24875"/>
        <label>1</label>
    </ligand>
</feature>
<feature type="binding site" evidence="1">
    <location>
        <position position="230"/>
    </location>
    <ligand>
        <name>Fe cation</name>
        <dbReference type="ChEBI" id="CHEBI:24875"/>
        <label>2</label>
    </ligand>
</feature>
<feature type="binding site" evidence="1">
    <location>
        <position position="263"/>
    </location>
    <ligand>
        <name>Fe cation</name>
        <dbReference type="ChEBI" id="CHEBI:24875"/>
        <label>1</label>
    </ligand>
</feature>
<feature type="binding site" evidence="1">
    <location>
        <position position="263"/>
    </location>
    <ligand>
        <name>Fe cation</name>
        <dbReference type="ChEBI" id="CHEBI:24875"/>
        <label>2</label>
    </ligand>
</feature>
<feature type="binding site" evidence="1">
    <location>
        <position position="266"/>
    </location>
    <ligand>
        <name>Fe cation</name>
        <dbReference type="ChEBI" id="CHEBI:24875"/>
        <label>2</label>
    </ligand>
</feature>
<accession>E3PZR9</accession>
<organism>
    <name type="scientific">Ophrys sphegodes</name>
    <name type="common">Early spider orchid</name>
    <name type="synonym">Arachnites aranifera</name>
    <dbReference type="NCBI Taxonomy" id="145953"/>
    <lineage>
        <taxon>Eukaryota</taxon>
        <taxon>Viridiplantae</taxon>
        <taxon>Streptophyta</taxon>
        <taxon>Embryophyta</taxon>
        <taxon>Tracheophyta</taxon>
        <taxon>Spermatophyta</taxon>
        <taxon>Magnoliopsida</taxon>
        <taxon>Liliopsida</taxon>
        <taxon>Asparagales</taxon>
        <taxon>Orchidaceae</taxon>
        <taxon>Orchidoideae</taxon>
        <taxon>Orchideae</taxon>
        <taxon>Orchidinae</taxon>
        <taxon>Ophrys</taxon>
    </lineage>
</organism>
<gene>
    <name type="primary">SAD3</name>
</gene>
<keyword id="KW-0150">Chloroplast</keyword>
<keyword id="KW-0275">Fatty acid biosynthesis</keyword>
<keyword id="KW-0276">Fatty acid metabolism</keyword>
<keyword id="KW-0408">Iron</keyword>
<keyword id="KW-0444">Lipid biosynthesis</keyword>
<keyword id="KW-0443">Lipid metabolism</keyword>
<keyword id="KW-0479">Metal-binding</keyword>
<keyword id="KW-0560">Oxidoreductase</keyword>
<keyword id="KW-0934">Plastid</keyword>
<keyword id="KW-0809">Transit peptide</keyword>
<name>STAD3_OPHSP</name>
<evidence type="ECO:0000250" key="1">
    <source>
        <dbReference type="UniProtKB" id="P22337"/>
    </source>
</evidence>
<evidence type="ECO:0000250" key="2">
    <source>
        <dbReference type="UniProtKB" id="Q4KN79"/>
    </source>
</evidence>
<evidence type="ECO:0000255" key="3"/>
<evidence type="ECO:0000269" key="4">
    <source>
    </source>
</evidence>
<evidence type="ECO:0000305" key="5"/>
<proteinExistence type="evidence at transcript level"/>
<sequence>MALRSLFLPNAFPNASSFRGGSRRGAAPRAMPIVMKSNVEVGARNEIAKKPFTPPFEIHEQITHSLPPEKIEIFKSLEGWATDNILIHLRPVEKSWQPQDYLPDPSAESFHDQVKELRQRSKEIPDDYFVALVGDMITEEALPTYQTMLNTLDGVRDETGASLTSWAVWTRAWTAEENRHGDLLNKYLYLTGRVDMRQIEKTIQYLIGSGMDPRTENNPYLGFIYTSFQERATSISHGNTARHAKDYGDLSLAQVCGIIASDEKRHEKAYTKIIEKLFEIDPDATVLAFADMMKKKISMPAHLMYDGRDDNLFKHFSSVAQRLGVYTAKDYADILEFLVERWNVEELTGLSSEGRKAQDYVCTLVPRIRKVDERAQGMAKKGGQTMRFSWIHDREVML</sequence>
<reference key="1">
    <citation type="journal article" date="2011" name="Proc. Natl. Acad. Sci. U.S.A.">
        <title>Stearoyl-acyl carrier protein desaturases are associated with floral isolation in sexually deceptive orchids.</title>
        <authorList>
            <person name="Schlueter P.M."/>
            <person name="Xu S."/>
            <person name="Gagliardini V."/>
            <person name="Whittle E."/>
            <person name="Shanklin J."/>
            <person name="Grossniklaus U."/>
            <person name="Schiestl F.P."/>
        </authorList>
    </citation>
    <scope>NUCLEOTIDE SEQUENCE [MRNA]</scope>
    <scope>TISSUE SPECIFICITY</scope>
    <source>
        <tissue>Flower</tissue>
    </source>
</reference>
<comment type="function">
    <text evidence="2">Converts palmitoyl-ACP to (4Z)-hexadec-4-enoyl-ACP by introduction of a cis double bond between carbons 4 and 5 of the acyl chain.</text>
</comment>
<comment type="catalytic activity">
    <reaction evidence="2">
        <text>hexadecanoyl-[ACP] + 2 reduced [2Fe-2S]-[ferredoxin] + O2 + 2 H(+) = (4Z)-hexadecenoyl-[ACP] + 2 oxidized [2Fe-2S]-[ferredoxin] + 2 H2O</text>
        <dbReference type="Rhea" id="RHEA:38043"/>
        <dbReference type="Rhea" id="RHEA-COMP:9652"/>
        <dbReference type="Rhea" id="RHEA-COMP:10000"/>
        <dbReference type="Rhea" id="RHEA-COMP:10001"/>
        <dbReference type="Rhea" id="RHEA-COMP:11488"/>
        <dbReference type="ChEBI" id="CHEBI:15377"/>
        <dbReference type="ChEBI" id="CHEBI:15378"/>
        <dbReference type="ChEBI" id="CHEBI:15379"/>
        <dbReference type="ChEBI" id="CHEBI:33737"/>
        <dbReference type="ChEBI" id="CHEBI:33738"/>
        <dbReference type="ChEBI" id="CHEBI:78483"/>
        <dbReference type="ChEBI" id="CHEBI:85919"/>
        <dbReference type="EC" id="1.14.19.11"/>
    </reaction>
</comment>
<comment type="cofactor">
    <cofactor evidence="1">
        <name>Fe(2+)</name>
        <dbReference type="ChEBI" id="CHEBI:29033"/>
    </cofactor>
    <text evidence="1">Binds 2 Fe(2+) ions per subunit.</text>
</comment>
<comment type="pathway">
    <text>Lipid metabolism; fatty acid metabolism.</text>
</comment>
<comment type="subunit">
    <text evidence="1">Homodimer.</text>
</comment>
<comment type="subcellular location">
    <subcellularLocation>
        <location evidence="1">Plastid</location>
        <location evidence="1">Chloroplast stroma</location>
    </subcellularLocation>
</comment>
<comment type="tissue specificity">
    <text evidence="4">Preferentially expressed in the flower labellum. Low expression in leaves.</text>
</comment>
<comment type="similarity">
    <text evidence="5">Belongs to the fatty acid desaturase type 2 family.</text>
</comment>
<protein>
    <recommendedName>
        <fullName>Palmitoyl-[acyl-carrier-protein] 4-desaturase 3, chloroplastic</fullName>
        <ecNumber>1.14.19.11</ecNumber>
    </recommendedName>
    <alternativeName>
        <fullName>Acyl-[acyl-carrier-protein] desaturase 3</fullName>
    </alternativeName>
</protein>
<dbReference type="EC" id="1.14.19.11"/>
<dbReference type="EMBL" id="FR688106">
    <property type="protein sequence ID" value="CBW95563.1"/>
    <property type="molecule type" value="mRNA"/>
</dbReference>
<dbReference type="SMR" id="E3PZR9"/>
<dbReference type="UniPathway" id="UPA00199"/>
<dbReference type="GO" id="GO:0009570">
    <property type="term" value="C:chloroplast stroma"/>
    <property type="evidence" value="ECO:0007669"/>
    <property type="project" value="UniProtKB-SubCell"/>
</dbReference>
<dbReference type="GO" id="GO:0046872">
    <property type="term" value="F:metal ion binding"/>
    <property type="evidence" value="ECO:0007669"/>
    <property type="project" value="UniProtKB-KW"/>
</dbReference>
<dbReference type="GO" id="GO:0045300">
    <property type="term" value="F:stearoyl-[ACP] desaturase activity"/>
    <property type="evidence" value="ECO:0007669"/>
    <property type="project" value="InterPro"/>
</dbReference>
<dbReference type="GO" id="GO:0006633">
    <property type="term" value="P:fatty acid biosynthetic process"/>
    <property type="evidence" value="ECO:0007669"/>
    <property type="project" value="UniProtKB-KW"/>
</dbReference>
<dbReference type="CDD" id="cd01050">
    <property type="entry name" value="Acyl_ACP_Desat"/>
    <property type="match status" value="1"/>
</dbReference>
<dbReference type="FunFam" id="1.10.620.20:FF:000002">
    <property type="entry name" value="Stearoyl-[acyl-carrier-protein] 9-desaturase, chloroplastic"/>
    <property type="match status" value="1"/>
</dbReference>
<dbReference type="Gene3D" id="1.10.620.20">
    <property type="entry name" value="Ribonucleotide Reductase, subunit A"/>
    <property type="match status" value="1"/>
</dbReference>
<dbReference type="InterPro" id="IPR005803">
    <property type="entry name" value="FADS-2_CS"/>
</dbReference>
<dbReference type="InterPro" id="IPR005067">
    <property type="entry name" value="Fatty_acid_desaturase-2"/>
</dbReference>
<dbReference type="InterPro" id="IPR009078">
    <property type="entry name" value="Ferritin-like_SF"/>
</dbReference>
<dbReference type="InterPro" id="IPR012348">
    <property type="entry name" value="RNR-like"/>
</dbReference>
<dbReference type="PANTHER" id="PTHR31155">
    <property type="entry name" value="ACYL- ACYL-CARRIER-PROTEIN DESATURASE-RELATED"/>
    <property type="match status" value="1"/>
</dbReference>
<dbReference type="PANTHER" id="PTHR31155:SF9">
    <property type="entry name" value="STEAROYL-[ACYL-CARRIER-PROTEIN] 9-DESATURASE 7, CHLOROPLASTIC"/>
    <property type="match status" value="1"/>
</dbReference>
<dbReference type="Pfam" id="PF03405">
    <property type="entry name" value="FA_desaturase_2"/>
    <property type="match status" value="1"/>
</dbReference>
<dbReference type="PIRSF" id="PIRSF000346">
    <property type="entry name" value="Dlt9_acylACP_des"/>
    <property type="match status" value="1"/>
</dbReference>
<dbReference type="SUPFAM" id="SSF47240">
    <property type="entry name" value="Ferritin-like"/>
    <property type="match status" value="1"/>
</dbReference>
<dbReference type="PROSITE" id="PS00574">
    <property type="entry name" value="FATTY_ACID_DESATUR_2"/>
    <property type="match status" value="1"/>
</dbReference>